<comment type="function">
    <text evidence="2 3 5 6">Binds galactosides (By similarity). Has high affinity for the Forssman pentasaccharide (By similarity). Ligand for HAVCR2/TIM3 (By similarity). Binding to HAVCR2 induces T-helper type 1 lymphocyte (Th1) death (By similarity). Also stimulates bactericidal activity in infected macrophages by causing macrophage activation and IL1B secretion which restricts intracellular bacterial growth (By similarity). Ligand for P4HB; the interaction retains P4HB at the cell surface of Th2 T helper cells, increasing disulfide reductase activity at the plasma membrane, altering the plasma membrane redox state and enhancing cell migration (By similarity). Ligand for CD44; the interaction enhances binding of SMAD3 to the FOXP3 promoter, leading to up-regulation of FOXP3 expression and increased induced regulatory T (iTreg) cell stability and suppressive function (By similarity). Promotes ability of mesenchymal stromal cells to suppress T-cell proliferation (By similarity). Expands regulatory T-cells and induces cytotoxic T-cell apoptosis following virus infection (By similarity). Activates ERK1/2 phosphorylation inducing cytokine (IL-6, IL-8, IL-12) and chemokine (CCL2) production in mast and dendritic cells (By similarity). Inhibits degranulation and induces apoptosis of mast cells (By similarity). Induces maturation and migration of dendritic cells (By similarity). Inhibits natural killer (NK) cell function (By similarity). Can transform NK cell phenotype from peripheral to decidual during pregnancy (By similarity). Astrocyte derived galectin-9 enhances microglial TNF production (PubMed:25158758). May play a role in thymocyte-epithelial interactions relevant to the biology of the thymus. May provide the molecular basis for urate flux across cell membranes, allowing urate that is formed during purine metabolism to efflux from cells and serving as an electrogenic transporter that plays an important role in renal and gastrointestinal urate excretion (PubMed:8995305). Highly selective to the anion urate (PubMed:8995305).</text>
</comment>
<comment type="subcellular location">
    <subcellularLocation>
        <location evidence="2">Cytoplasm</location>
    </subcellularLocation>
    <subcellularLocation>
        <location evidence="2">Nucleus</location>
    </subcellularLocation>
    <subcellularLocation>
        <location evidence="2">Secreted</location>
    </subcellularLocation>
    <text evidence="2 3">May also be secreted by a non-classical secretory pathway. Secreted by mesenchymal stromal cells upon IFNG stimulation.</text>
</comment>
<comment type="alternative products">
    <event type="alternative splicing"/>
    <isoform>
        <id>P97840-1</id>
        <name>Long</name>
        <sequence type="displayed"/>
    </isoform>
    <isoform>
        <id>P97840-2</id>
        <name>Short</name>
        <sequence type="described" ref="VSP_003098"/>
    </isoform>
    <text>Additional isoforms seem to exist.</text>
</comment>
<comment type="tissue specificity">
    <text>The isoform Long is expressed exclusively in the small intestine.</text>
</comment>
<comment type="induction">
    <text evidence="5">By viral mimic polyinosinic:polycytidylic acid (poly I:C) and lipopolysaccharides (LPS) in microglia.</text>
</comment>
<comment type="domain">
    <text>Contains two homologous but distinct carbohydrate-binding domains.</text>
</comment>
<comment type="miscellaneous">
    <text>The LGALS9-like proteins are encoded by a duplicated regions on chromosome 17; there are at least 3 genes coding for galectin-9-like proteins.</text>
</comment>
<sequence>MAFFSTQPPYMNPVIPFTGIIQGGLQNGLQITLQGTVHPFPNRIAVNFQTGFSGNDIAFHFNPRFEEGGYVVCNTKQNGKWGPEERKMQMPFQKGMPFELCFLVQRSEFKVMVNKNFFVQYSHRVPYHLVDTISVSGCLHLSFINFQNSTAAPVQPVFSTMQFSQPVQFPRMPKGRKQRTQGFQPALQAPVAQTIIHTVHSIPGQMLSTPGIPPMAYPTPAYTIPFFTSIPNGFYPSKSINISGVVLPDAKRFHINLRCGGDIAFHLNPRFNEKVVVRNTQINNSWGPEERSLPGRMPFNRGQSFSVWILCEGHCFKVAVDGQHICEYYHRLKNLPDINTLEVAGDIQLTHVQT</sequence>
<gene>
    <name type="primary">Lgals9</name>
</gene>
<name>LEG9_RAT</name>
<proteinExistence type="evidence at transcript level"/>
<dbReference type="EMBL" id="U59462">
    <property type="protein sequence ID" value="AAB51192.1"/>
    <property type="molecule type" value="mRNA"/>
</dbReference>
<dbReference type="EMBL" id="U72741">
    <property type="protein sequence ID" value="AAB68592.1"/>
    <property type="molecule type" value="mRNA"/>
</dbReference>
<dbReference type="EMBL" id="U67958">
    <property type="protein sequence ID" value="AAB48591.1"/>
    <property type="molecule type" value="mRNA"/>
</dbReference>
<dbReference type="RefSeq" id="NP_037109.1">
    <property type="nucleotide sequence ID" value="NM_012977.1"/>
</dbReference>
<dbReference type="SMR" id="P97840"/>
<dbReference type="FunCoup" id="P97840">
    <property type="interactions" value="132"/>
</dbReference>
<dbReference type="STRING" id="10116.ENSRNOP00000017042"/>
<dbReference type="TCDB" id="9.B.9.1.1">
    <property type="family name" value="the urate transporter (uat) family"/>
</dbReference>
<dbReference type="GlyGen" id="P97840">
    <property type="glycosylation" value="1 site"/>
</dbReference>
<dbReference type="iPTMnet" id="P97840"/>
<dbReference type="PhosphoSitePlus" id="P97840"/>
<dbReference type="jPOST" id="P97840"/>
<dbReference type="PaxDb" id="10116-ENSRNOP00000017042"/>
<dbReference type="GeneID" id="25476"/>
<dbReference type="KEGG" id="rno:25476"/>
<dbReference type="AGR" id="RGD:3005"/>
<dbReference type="CTD" id="3965"/>
<dbReference type="RGD" id="3005">
    <property type="gene designation" value="Lgals9"/>
</dbReference>
<dbReference type="eggNOG" id="KOG3587">
    <property type="taxonomic scope" value="Eukaryota"/>
</dbReference>
<dbReference type="InParanoid" id="P97840"/>
<dbReference type="OrthoDB" id="5795596at2759"/>
<dbReference type="PhylomeDB" id="P97840"/>
<dbReference type="PRO" id="PR:P97840"/>
<dbReference type="Proteomes" id="UP000002494">
    <property type="component" value="Unplaced"/>
</dbReference>
<dbReference type="GO" id="GO:0005737">
    <property type="term" value="C:cytoplasm"/>
    <property type="evidence" value="ECO:0000266"/>
    <property type="project" value="RGD"/>
</dbReference>
<dbReference type="GO" id="GO:0005829">
    <property type="term" value="C:cytosol"/>
    <property type="evidence" value="ECO:0000318"/>
    <property type="project" value="GO_Central"/>
</dbReference>
<dbReference type="GO" id="GO:0005615">
    <property type="term" value="C:extracellular space"/>
    <property type="evidence" value="ECO:0000266"/>
    <property type="project" value="RGD"/>
</dbReference>
<dbReference type="GO" id="GO:0005634">
    <property type="term" value="C:nucleus"/>
    <property type="evidence" value="ECO:0000266"/>
    <property type="project" value="RGD"/>
</dbReference>
<dbReference type="GO" id="GO:0005886">
    <property type="term" value="C:plasma membrane"/>
    <property type="evidence" value="ECO:0007669"/>
    <property type="project" value="GOC"/>
</dbReference>
<dbReference type="GO" id="GO:0030246">
    <property type="term" value="F:carbohydrate binding"/>
    <property type="evidence" value="ECO:0000250"/>
    <property type="project" value="UniProtKB"/>
</dbReference>
<dbReference type="GO" id="GO:0048030">
    <property type="term" value="F:disaccharide binding"/>
    <property type="evidence" value="ECO:0000266"/>
    <property type="project" value="RGD"/>
</dbReference>
<dbReference type="GO" id="GO:0019899">
    <property type="term" value="F:enzyme binding"/>
    <property type="evidence" value="ECO:0000266"/>
    <property type="project" value="RGD"/>
</dbReference>
<dbReference type="GO" id="GO:0016936">
    <property type="term" value="F:galactoside binding"/>
    <property type="evidence" value="ECO:0000266"/>
    <property type="project" value="RGD"/>
</dbReference>
<dbReference type="GO" id="GO:0070492">
    <property type="term" value="F:oligosaccharide binding"/>
    <property type="evidence" value="ECO:0000266"/>
    <property type="project" value="RGD"/>
</dbReference>
<dbReference type="GO" id="GO:0043539">
    <property type="term" value="F:protein serine/threonine kinase activator activity"/>
    <property type="evidence" value="ECO:0000266"/>
    <property type="project" value="RGD"/>
</dbReference>
<dbReference type="GO" id="GO:0048018">
    <property type="term" value="F:receptor ligand activity"/>
    <property type="evidence" value="ECO:0000266"/>
    <property type="project" value="RGD"/>
</dbReference>
<dbReference type="GO" id="GO:0005102">
    <property type="term" value="F:signaling receptor binding"/>
    <property type="evidence" value="ECO:0000266"/>
    <property type="project" value="RGD"/>
</dbReference>
<dbReference type="GO" id="GO:0071346">
    <property type="term" value="P:cellular response to type II interferon"/>
    <property type="evidence" value="ECO:0000266"/>
    <property type="project" value="RGD"/>
</dbReference>
<dbReference type="GO" id="GO:0098586">
    <property type="term" value="P:cellular response to virus"/>
    <property type="evidence" value="ECO:0000266"/>
    <property type="project" value="RGD"/>
</dbReference>
<dbReference type="GO" id="GO:0070371">
    <property type="term" value="P:ERK1 and ERK2 cascade"/>
    <property type="evidence" value="ECO:0000266"/>
    <property type="project" value="RGD"/>
</dbReference>
<dbReference type="GO" id="GO:0007565">
    <property type="term" value="P:female pregnancy"/>
    <property type="evidence" value="ECO:0000266"/>
    <property type="project" value="RGD"/>
</dbReference>
<dbReference type="GO" id="GO:0006954">
    <property type="term" value="P:inflammatory response"/>
    <property type="evidence" value="ECO:0000266"/>
    <property type="project" value="RGD"/>
</dbReference>
<dbReference type="GO" id="GO:0045185">
    <property type="term" value="P:maintenance of protein location"/>
    <property type="evidence" value="ECO:0000266"/>
    <property type="project" value="RGD"/>
</dbReference>
<dbReference type="GO" id="GO:0060135">
    <property type="term" value="P:maternal process involved in female pregnancy"/>
    <property type="evidence" value="ECO:0000266"/>
    <property type="project" value="RGD"/>
</dbReference>
<dbReference type="GO" id="GO:0006811">
    <property type="term" value="P:monoatomic ion transport"/>
    <property type="evidence" value="ECO:0007669"/>
    <property type="project" value="UniProtKB-KW"/>
</dbReference>
<dbReference type="GO" id="GO:0002519">
    <property type="term" value="P:natural killer cell tolerance induction"/>
    <property type="evidence" value="ECO:0000266"/>
    <property type="project" value="RGD"/>
</dbReference>
<dbReference type="GO" id="GO:0046007">
    <property type="term" value="P:negative regulation of activated T cell proliferation"/>
    <property type="evidence" value="ECO:0000266"/>
    <property type="project" value="RGD"/>
</dbReference>
<dbReference type="GO" id="GO:2000562">
    <property type="term" value="P:negative regulation of CD4-positive, alpha-beta T cell proliferation"/>
    <property type="evidence" value="ECO:0000266"/>
    <property type="project" value="RGD"/>
</dbReference>
<dbReference type="GO" id="GO:0032682">
    <property type="term" value="P:negative regulation of chemokine production"/>
    <property type="evidence" value="ECO:0000266"/>
    <property type="project" value="RGD"/>
</dbReference>
<dbReference type="GO" id="GO:0010629">
    <property type="term" value="P:negative regulation of gene expression"/>
    <property type="evidence" value="ECO:0000266"/>
    <property type="project" value="RGD"/>
</dbReference>
<dbReference type="GO" id="GO:0050728">
    <property type="term" value="P:negative regulation of inflammatory response"/>
    <property type="evidence" value="ECO:0000266"/>
    <property type="project" value="RGD"/>
</dbReference>
<dbReference type="GO" id="GO:0043305">
    <property type="term" value="P:negative regulation of mast cell degranulation"/>
    <property type="evidence" value="ECO:0000266"/>
    <property type="project" value="RGD"/>
</dbReference>
<dbReference type="GO" id="GO:0032815">
    <property type="term" value="P:negative regulation of natural killer cell activation"/>
    <property type="evidence" value="ECO:0000266"/>
    <property type="project" value="RGD"/>
</dbReference>
<dbReference type="GO" id="GO:0043322">
    <property type="term" value="P:negative regulation of natural killer cell degranulation"/>
    <property type="evidence" value="ECO:0000266"/>
    <property type="project" value="RGD"/>
</dbReference>
<dbReference type="GO" id="GO:0045953">
    <property type="term" value="P:negative regulation of natural killer cell mediated cytotoxicity"/>
    <property type="evidence" value="ECO:0000266"/>
    <property type="project" value="RGD"/>
</dbReference>
<dbReference type="GO" id="GO:0002826">
    <property type="term" value="P:negative regulation of T-helper 1 type immune response"/>
    <property type="evidence" value="ECO:0000266"/>
    <property type="project" value="RGD"/>
</dbReference>
<dbReference type="GO" id="GO:0032720">
    <property type="term" value="P:negative regulation of tumor necrosis factor production"/>
    <property type="evidence" value="ECO:0000266"/>
    <property type="project" value="RGD"/>
</dbReference>
<dbReference type="GO" id="GO:0032689">
    <property type="term" value="P:negative regulation of type II interferon production"/>
    <property type="evidence" value="ECO:0000266"/>
    <property type="project" value="RGD"/>
</dbReference>
<dbReference type="GO" id="GO:0038066">
    <property type="term" value="P:p38MAPK cascade"/>
    <property type="evidence" value="ECO:0000266"/>
    <property type="project" value="RGD"/>
</dbReference>
<dbReference type="GO" id="GO:0070241">
    <property type="term" value="P:positive regulation of activated T cell autonomous cell death"/>
    <property type="evidence" value="ECO:0000266"/>
    <property type="project" value="RGD"/>
</dbReference>
<dbReference type="GO" id="GO:2000563">
    <property type="term" value="P:positive regulation of CD4-positive, alpha-beta T cell proliferation"/>
    <property type="evidence" value="ECO:0000266"/>
    <property type="project" value="RGD"/>
</dbReference>
<dbReference type="GO" id="GO:0032834">
    <property type="term" value="P:positive regulation of CD4-positive, CD25-positive, alpha-beta regulatory T cell differentiation involved in immune response"/>
    <property type="evidence" value="ECO:0000266"/>
    <property type="project" value="RGD"/>
</dbReference>
<dbReference type="GO" id="GO:0032722">
    <property type="term" value="P:positive regulation of chemokine production"/>
    <property type="evidence" value="ECO:0000266"/>
    <property type="project" value="RGD"/>
</dbReference>
<dbReference type="GO" id="GO:0001819">
    <property type="term" value="P:positive regulation of cytokine production"/>
    <property type="evidence" value="ECO:0000266"/>
    <property type="project" value="RGD"/>
</dbReference>
<dbReference type="GO" id="GO:1900426">
    <property type="term" value="P:positive regulation of defense response to bacterium"/>
    <property type="evidence" value="ECO:0000266"/>
    <property type="project" value="RGD"/>
</dbReference>
<dbReference type="GO" id="GO:2000670">
    <property type="term" value="P:positive regulation of dendritic cell apoptotic process"/>
    <property type="evidence" value="ECO:0000266"/>
    <property type="project" value="RGD"/>
</dbReference>
<dbReference type="GO" id="GO:2000510">
    <property type="term" value="P:positive regulation of dendritic cell chemotaxis"/>
    <property type="evidence" value="ECO:0000266"/>
    <property type="project" value="RGD"/>
</dbReference>
<dbReference type="GO" id="GO:2001200">
    <property type="term" value="P:positive regulation of dendritic cell differentiation"/>
    <property type="evidence" value="ECO:0000266"/>
    <property type="project" value="RGD"/>
</dbReference>
<dbReference type="GO" id="GO:0070374">
    <property type="term" value="P:positive regulation of ERK1 and ERK2 cascade"/>
    <property type="evidence" value="ECO:0000266"/>
    <property type="project" value="RGD"/>
</dbReference>
<dbReference type="GO" id="GO:0010628">
    <property type="term" value="P:positive regulation of gene expression"/>
    <property type="evidence" value="ECO:0000266"/>
    <property type="project" value="RGD"/>
</dbReference>
<dbReference type="GO" id="GO:0045089">
    <property type="term" value="P:positive regulation of innate immune response"/>
    <property type="evidence" value="ECO:0000266"/>
    <property type="project" value="RGD"/>
</dbReference>
<dbReference type="GO" id="GO:0032731">
    <property type="term" value="P:positive regulation of interleukin-1 beta production"/>
    <property type="evidence" value="ECO:0000266"/>
    <property type="project" value="RGD"/>
</dbReference>
<dbReference type="GO" id="GO:0032732">
    <property type="term" value="P:positive regulation of interleukin-1 production"/>
    <property type="evidence" value="ECO:0000266"/>
    <property type="project" value="RGD"/>
</dbReference>
<dbReference type="GO" id="GO:0032733">
    <property type="term" value="P:positive regulation of interleukin-10 production"/>
    <property type="evidence" value="ECO:0000266"/>
    <property type="project" value="RGD"/>
</dbReference>
<dbReference type="GO" id="GO:0032735">
    <property type="term" value="P:positive regulation of interleukin-12 production"/>
    <property type="evidence" value="ECO:0000266"/>
    <property type="project" value="RGD"/>
</dbReference>
<dbReference type="GO" id="GO:0032736">
    <property type="term" value="P:positive regulation of interleukin-13 production"/>
    <property type="evidence" value="ECO:0000266"/>
    <property type="project" value="RGD"/>
</dbReference>
<dbReference type="GO" id="GO:0032753">
    <property type="term" value="P:positive regulation of interleukin-4 production"/>
    <property type="evidence" value="ECO:0000266"/>
    <property type="project" value="RGD"/>
</dbReference>
<dbReference type="GO" id="GO:0032755">
    <property type="term" value="P:positive regulation of interleukin-6 production"/>
    <property type="evidence" value="ECO:0000266"/>
    <property type="project" value="RGD"/>
</dbReference>
<dbReference type="GO" id="GO:0032757">
    <property type="term" value="P:positive regulation of interleukin-8 production"/>
    <property type="evidence" value="ECO:0000266"/>
    <property type="project" value="RGD"/>
</dbReference>
<dbReference type="GO" id="GO:0043032">
    <property type="term" value="P:positive regulation of macrophage activation"/>
    <property type="evidence" value="ECO:0000266"/>
    <property type="project" value="RGD"/>
</dbReference>
<dbReference type="GO" id="GO:0071639">
    <property type="term" value="P:positive regulation of monocyte chemotactic protein-1 production"/>
    <property type="evidence" value="ECO:0000266"/>
    <property type="project" value="RGD"/>
</dbReference>
<dbReference type="GO" id="GO:1901224">
    <property type="term" value="P:positive regulation of non-canonical NF-kappaB signal transduction"/>
    <property type="evidence" value="ECO:0000266"/>
    <property type="project" value="RGD"/>
</dbReference>
<dbReference type="GO" id="GO:0045591">
    <property type="term" value="P:positive regulation of regulatory T cell differentiation"/>
    <property type="evidence" value="ECO:0000266"/>
    <property type="project" value="RGD"/>
</dbReference>
<dbReference type="GO" id="GO:0060391">
    <property type="term" value="P:positive regulation of SMAD protein signal transduction"/>
    <property type="evidence" value="ECO:0000266"/>
    <property type="project" value="RGD"/>
</dbReference>
<dbReference type="GO" id="GO:2001190">
    <property type="term" value="P:positive regulation of T cell activation via T cell receptor contact with antigen bound to MHC molecule on antigen presenting cell"/>
    <property type="evidence" value="ECO:0000266"/>
    <property type="project" value="RGD"/>
</dbReference>
<dbReference type="GO" id="GO:2000406">
    <property type="term" value="P:positive regulation of T cell migration"/>
    <property type="evidence" value="ECO:0000266"/>
    <property type="project" value="RGD"/>
</dbReference>
<dbReference type="GO" id="GO:0071636">
    <property type="term" value="P:positive regulation of transforming growth factor beta production"/>
    <property type="evidence" value="ECO:0000266"/>
    <property type="project" value="RGD"/>
</dbReference>
<dbReference type="GO" id="GO:0032760">
    <property type="term" value="P:positive regulation of tumor necrosis factor production"/>
    <property type="evidence" value="ECO:0000266"/>
    <property type="project" value="RGD"/>
</dbReference>
<dbReference type="GO" id="GO:0032729">
    <property type="term" value="P:positive regulation of type II interferon production"/>
    <property type="evidence" value="ECO:0000266"/>
    <property type="project" value="RGD"/>
</dbReference>
<dbReference type="GO" id="GO:0046598">
    <property type="term" value="P:positive regulation of viral entry into host cell"/>
    <property type="evidence" value="ECO:0000266"/>
    <property type="project" value="RGD"/>
</dbReference>
<dbReference type="GO" id="GO:0043113">
    <property type="term" value="P:receptor clustering"/>
    <property type="evidence" value="ECO:0000266"/>
    <property type="project" value="RGD"/>
</dbReference>
<dbReference type="GO" id="GO:0032823">
    <property type="term" value="P:regulation of natural killer cell differentiation"/>
    <property type="evidence" value="ECO:0000266"/>
    <property type="project" value="RGD"/>
</dbReference>
<dbReference type="GO" id="GO:0070555">
    <property type="term" value="P:response to interleukin-1"/>
    <property type="evidence" value="ECO:0000266"/>
    <property type="project" value="RGD"/>
</dbReference>
<dbReference type="GO" id="GO:0032496">
    <property type="term" value="P:response to lipopolysaccharide"/>
    <property type="evidence" value="ECO:0000266"/>
    <property type="project" value="RGD"/>
</dbReference>
<dbReference type="GO" id="GO:0034138">
    <property type="term" value="P:toll-like receptor 3 signaling pathway"/>
    <property type="evidence" value="ECO:0000315"/>
    <property type="project" value="UniProtKB"/>
</dbReference>
<dbReference type="GO" id="GO:0007179">
    <property type="term" value="P:transforming growth factor beta receptor signaling pathway"/>
    <property type="evidence" value="ECO:0000266"/>
    <property type="project" value="RGD"/>
</dbReference>
<dbReference type="CDD" id="cd00070">
    <property type="entry name" value="GLECT"/>
    <property type="match status" value="2"/>
</dbReference>
<dbReference type="FunFam" id="2.60.120.200:FF:000023">
    <property type="entry name" value="Galectin"/>
    <property type="match status" value="1"/>
</dbReference>
<dbReference type="FunFam" id="2.60.120.200:FF:000078">
    <property type="entry name" value="Galectin"/>
    <property type="match status" value="1"/>
</dbReference>
<dbReference type="Gene3D" id="2.60.120.200">
    <property type="match status" value="2"/>
</dbReference>
<dbReference type="InterPro" id="IPR013320">
    <property type="entry name" value="ConA-like_dom_sf"/>
</dbReference>
<dbReference type="InterPro" id="IPR044156">
    <property type="entry name" value="Galectin-like"/>
</dbReference>
<dbReference type="InterPro" id="IPR001079">
    <property type="entry name" value="Galectin_CRD"/>
</dbReference>
<dbReference type="PANTHER" id="PTHR11346">
    <property type="entry name" value="GALECTIN"/>
    <property type="match status" value="1"/>
</dbReference>
<dbReference type="PANTHER" id="PTHR11346:SF80">
    <property type="entry name" value="GALECTIN-9C"/>
    <property type="match status" value="1"/>
</dbReference>
<dbReference type="Pfam" id="PF00337">
    <property type="entry name" value="Gal-bind_lectin"/>
    <property type="match status" value="2"/>
</dbReference>
<dbReference type="SMART" id="SM00908">
    <property type="entry name" value="Gal-bind_lectin"/>
    <property type="match status" value="2"/>
</dbReference>
<dbReference type="SMART" id="SM00276">
    <property type="entry name" value="GLECT"/>
    <property type="match status" value="2"/>
</dbReference>
<dbReference type="SUPFAM" id="SSF49899">
    <property type="entry name" value="Concanavalin A-like lectins/glucanases"/>
    <property type="match status" value="2"/>
</dbReference>
<dbReference type="PROSITE" id="PS51304">
    <property type="entry name" value="GALECTIN"/>
    <property type="match status" value="2"/>
</dbReference>
<protein>
    <recommendedName>
        <fullName>Galectin-9</fullName>
        <shortName>Gal-9</shortName>
    </recommendedName>
    <alternativeName>
        <fullName>36 kDa beta-galactoside-binding lectin</fullName>
    </alternativeName>
    <alternativeName>
        <fullName>Urate transporter/channel</fullName>
        <shortName>UAT</shortName>
    </alternativeName>
</protein>
<reference key="1">
    <citation type="journal article" date="1997" name="J. Biol. Chem.">
        <title>Identification and characterization of galectin-9, a novel beta-galactoside-binding mammalian lectin.</title>
        <authorList>
            <person name="Wada J."/>
            <person name="Kanwar Y.S."/>
        </authorList>
    </citation>
    <scope>NUCLEOTIDE SEQUENCE [MRNA] (ISOFORMS LONG AND SHORT)</scope>
    <source>
        <strain>Sprague-Dawley</strain>
        <tissue>Kidney</tissue>
        <tissue>Small intestine</tissue>
    </source>
</reference>
<reference key="2">
    <citation type="journal article" date="1997" name="J. Biol. Chem.">
        <title>Molecular cloning and functional reconstitution of a urate transporter/channel.</title>
        <authorList>
            <person name="Leal-Pinto E."/>
            <person name="Tao W."/>
            <person name="Rappaport J."/>
            <person name="Richardson M."/>
            <person name="Knorr B.A."/>
            <person name="Abramson R.G."/>
        </authorList>
    </citation>
    <scope>NUCLEOTIDE SEQUENCE [MRNA] (ISOFORM SHORT)</scope>
    <scope>FUNCTION</scope>
    <source>
        <strain>Sprague-Dawley</strain>
        <tissue>Kidney</tissue>
    </source>
</reference>
<reference key="3">
    <citation type="journal article" date="2014" name="J. Neuroinflamm.">
        <title>Astrocyte galectin-9 potentiates microglial TNF secretion.</title>
        <authorList>
            <person name="Steelman A.J."/>
            <person name="Li J."/>
        </authorList>
    </citation>
    <scope>FUNCTION</scope>
    <scope>INDUCTION</scope>
</reference>
<evidence type="ECO:0000250" key="1"/>
<evidence type="ECO:0000250" key="2">
    <source>
        <dbReference type="UniProtKB" id="O00182"/>
    </source>
</evidence>
<evidence type="ECO:0000250" key="3">
    <source>
        <dbReference type="UniProtKB" id="O08573"/>
    </source>
</evidence>
<evidence type="ECO:0000255" key="4">
    <source>
        <dbReference type="PROSITE-ProRule" id="PRU00639"/>
    </source>
</evidence>
<evidence type="ECO:0000269" key="5">
    <source>
    </source>
</evidence>
<evidence type="ECO:0000269" key="6">
    <source>
    </source>
</evidence>
<evidence type="ECO:0000303" key="7">
    <source>
    </source>
</evidence>
<evidence type="ECO:0000303" key="8">
    <source>
    </source>
</evidence>
<organism>
    <name type="scientific">Rattus norvegicus</name>
    <name type="common">Rat</name>
    <dbReference type="NCBI Taxonomy" id="10116"/>
    <lineage>
        <taxon>Eukaryota</taxon>
        <taxon>Metazoa</taxon>
        <taxon>Chordata</taxon>
        <taxon>Craniata</taxon>
        <taxon>Vertebrata</taxon>
        <taxon>Euteleostomi</taxon>
        <taxon>Mammalia</taxon>
        <taxon>Eutheria</taxon>
        <taxon>Euarchontoglires</taxon>
        <taxon>Glires</taxon>
        <taxon>Rodentia</taxon>
        <taxon>Myomorpha</taxon>
        <taxon>Muroidea</taxon>
        <taxon>Muridae</taxon>
        <taxon>Murinae</taxon>
        <taxon>Rattus</taxon>
    </lineage>
</organism>
<keyword id="KW-0025">Alternative splicing</keyword>
<keyword id="KW-0963">Cytoplasm</keyword>
<keyword id="KW-0391">Immunity</keyword>
<keyword id="KW-0406">Ion transport</keyword>
<keyword id="KW-0430">Lectin</keyword>
<keyword id="KW-0539">Nucleus</keyword>
<keyword id="KW-1185">Reference proteome</keyword>
<keyword id="KW-0677">Repeat</keyword>
<keyword id="KW-0964">Secreted</keyword>
<keyword id="KW-0813">Transport</keyword>
<accession>P97840</accession>
<accession>O08588</accession>
<accession>O35866</accession>
<feature type="chain" id="PRO_0000076948" description="Galectin-9">
    <location>
        <begin position="1"/>
        <end position="354"/>
    </location>
</feature>
<feature type="domain" description="Galectin 1" evidence="4">
    <location>
        <begin position="17"/>
        <end position="147"/>
    </location>
</feature>
<feature type="domain" description="Galectin 2" evidence="4">
    <location>
        <begin position="226"/>
        <end position="354"/>
    </location>
</feature>
<feature type="binding site" evidence="1">
    <location>
        <position position="47"/>
    </location>
    <ligand>
        <name>a beta-D-galactoside</name>
        <dbReference type="ChEBI" id="CHEBI:28034"/>
        <label>1</label>
    </ligand>
</feature>
<feature type="binding site" evidence="1">
    <location>
        <position position="60"/>
    </location>
    <ligand>
        <name>a beta-D-galactoside</name>
        <dbReference type="ChEBI" id="CHEBI:28034"/>
        <label>1</label>
    </ligand>
</feature>
<feature type="binding site" evidence="1">
    <location>
        <position position="64"/>
    </location>
    <ligand>
        <name>a beta-D-galactoside</name>
        <dbReference type="ChEBI" id="CHEBI:28034"/>
        <label>1</label>
    </ligand>
</feature>
<feature type="binding site" evidence="1">
    <location>
        <position position="74"/>
    </location>
    <ligand>
        <name>a beta-D-galactoside</name>
        <dbReference type="ChEBI" id="CHEBI:28034"/>
        <label>1</label>
    </ligand>
</feature>
<feature type="binding site" evidence="1">
    <location>
        <begin position="81"/>
        <end position="87"/>
    </location>
    <ligand>
        <name>a beta-D-galactoside</name>
        <dbReference type="ChEBI" id="CHEBI:28034"/>
        <label>1</label>
    </ligand>
</feature>
<feature type="binding site" evidence="1">
    <location>
        <position position="266"/>
    </location>
    <ligand>
        <name>a beta-D-galactoside</name>
        <dbReference type="ChEBI" id="CHEBI:28034"/>
        <label>2</label>
    </ligand>
</feature>
<feature type="binding site" evidence="1">
    <location>
        <position position="270"/>
    </location>
    <ligand>
        <name>a beta-D-galactoside</name>
        <dbReference type="ChEBI" id="CHEBI:28034"/>
        <label>2</label>
    </ligand>
</feature>
<feature type="binding site" evidence="1">
    <location>
        <position position="280"/>
    </location>
    <ligand>
        <name>a beta-D-galactoside</name>
        <dbReference type="ChEBI" id="CHEBI:28034"/>
        <label>2</label>
    </ligand>
</feature>
<feature type="binding site" evidence="1">
    <location>
        <begin position="286"/>
        <end position="292"/>
    </location>
    <ligand>
        <name>a beta-D-galactoside</name>
        <dbReference type="ChEBI" id="CHEBI:28034"/>
        <label>2</label>
    </ligand>
</feature>
<feature type="splice variant" id="VSP_003098" description="In isoform Short." evidence="7 8">
    <location>
        <begin position="148"/>
        <end position="179"/>
    </location>
</feature>